<sequence>MSAAEPALAPLSPGAPVLVAGGGITGRAVLAALRRFGAAPTLCDDDPATLRGYVDSGVDTVSTSAAAERISRYALVVTSPGFAPTAPLPLAAAAAGVPVWGDVELAWRLDVAGHYGPPRRWLVVTGTNGKTTTTSMLHAMLTAAGRRSLLCGNIGSPVLDVLDQPAELLAVELSSFQLHWAPSLRPEGGAVLNIAEDHLDWHGTLADYAAAKARVLDGRVAVVGLDDSRAAALLSTARAPVRVGFRLGEPAAGELGVRGGQLVDRAFADDLTLLPVDSIPVPGPVGVLDALAAAALARCVDVPASPIAEAIVSFRVGRHRAEVVAVADGITYVDDSKATNPHAAEASVLAYPRVVWIAGGLLKGASVDAEVARMASWLVGAVLIGRDRREVAEALSRHAPDVPVVHVVTGEDAGMDATPVVFGANVTKVKHLGGDLGAAVMSAAVAAARDLAKPGDTVLLAPAGASFDQFAGYADRGEAFAAAVRAAIR</sequence>
<proteinExistence type="inferred from homology"/>
<protein>
    <recommendedName>
        <fullName evidence="1">UDP-N-acetylmuramoylalanine--D-glutamate ligase</fullName>
        <ecNumber evidence="1">6.3.2.9</ecNumber>
    </recommendedName>
    <alternativeName>
        <fullName evidence="1">D-glutamic acid-adding enzyme</fullName>
    </alternativeName>
    <alternativeName>
        <fullName evidence="1">UDP-N-acetylmuramoyl-L-alanyl-D-glutamate synthetase</fullName>
    </alternativeName>
</protein>
<feature type="chain" id="PRO_0000109045" description="UDP-N-acetylmuramoylalanine--D-glutamate ligase">
    <location>
        <begin position="1"/>
        <end position="489"/>
    </location>
</feature>
<feature type="binding site" evidence="1">
    <location>
        <begin position="126"/>
        <end position="132"/>
    </location>
    <ligand>
        <name>ATP</name>
        <dbReference type="ChEBI" id="CHEBI:30616"/>
    </ligand>
</feature>
<comment type="function">
    <text evidence="1">Cell wall formation. Catalyzes the addition of glutamate to the nucleotide precursor UDP-N-acetylmuramoyl-L-alanine (UMA).</text>
</comment>
<comment type="catalytic activity">
    <reaction evidence="1">
        <text>UDP-N-acetyl-alpha-D-muramoyl-L-alanine + D-glutamate + ATP = UDP-N-acetyl-alpha-D-muramoyl-L-alanyl-D-glutamate + ADP + phosphate + H(+)</text>
        <dbReference type="Rhea" id="RHEA:16429"/>
        <dbReference type="ChEBI" id="CHEBI:15378"/>
        <dbReference type="ChEBI" id="CHEBI:29986"/>
        <dbReference type="ChEBI" id="CHEBI:30616"/>
        <dbReference type="ChEBI" id="CHEBI:43474"/>
        <dbReference type="ChEBI" id="CHEBI:83898"/>
        <dbReference type="ChEBI" id="CHEBI:83900"/>
        <dbReference type="ChEBI" id="CHEBI:456216"/>
        <dbReference type="EC" id="6.3.2.9"/>
    </reaction>
</comment>
<comment type="pathway">
    <text evidence="1">Cell wall biogenesis; peptidoglycan biosynthesis.</text>
</comment>
<comment type="subcellular location">
    <subcellularLocation>
        <location evidence="1">Cytoplasm</location>
    </subcellularLocation>
</comment>
<comment type="similarity">
    <text evidence="1">Belongs to the MurCDEF family.</text>
</comment>
<dbReference type="EC" id="6.3.2.9" evidence="1"/>
<dbReference type="EMBL" id="AE016958">
    <property type="protein sequence ID" value="AAS04216.1"/>
    <property type="molecule type" value="Genomic_DNA"/>
</dbReference>
<dbReference type="RefSeq" id="WP_010949403.1">
    <property type="nucleotide sequence ID" value="NZ_CP106873.1"/>
</dbReference>
<dbReference type="SMR" id="Q73YQ6"/>
<dbReference type="STRING" id="262316.MAP_1899c"/>
<dbReference type="KEGG" id="mpa:MAP_1899c"/>
<dbReference type="PATRIC" id="fig|262316.17.peg.2013"/>
<dbReference type="eggNOG" id="COG0771">
    <property type="taxonomic scope" value="Bacteria"/>
</dbReference>
<dbReference type="HOGENOM" id="CLU_032540_0_0_11"/>
<dbReference type="UniPathway" id="UPA00219"/>
<dbReference type="Proteomes" id="UP000000580">
    <property type="component" value="Chromosome"/>
</dbReference>
<dbReference type="GO" id="GO:0005737">
    <property type="term" value="C:cytoplasm"/>
    <property type="evidence" value="ECO:0007669"/>
    <property type="project" value="UniProtKB-SubCell"/>
</dbReference>
<dbReference type="GO" id="GO:0005524">
    <property type="term" value="F:ATP binding"/>
    <property type="evidence" value="ECO:0007669"/>
    <property type="project" value="UniProtKB-UniRule"/>
</dbReference>
<dbReference type="GO" id="GO:0008764">
    <property type="term" value="F:UDP-N-acetylmuramoylalanine-D-glutamate ligase activity"/>
    <property type="evidence" value="ECO:0007669"/>
    <property type="project" value="UniProtKB-UniRule"/>
</dbReference>
<dbReference type="GO" id="GO:0051301">
    <property type="term" value="P:cell division"/>
    <property type="evidence" value="ECO:0007669"/>
    <property type="project" value="UniProtKB-KW"/>
</dbReference>
<dbReference type="GO" id="GO:0071555">
    <property type="term" value="P:cell wall organization"/>
    <property type="evidence" value="ECO:0007669"/>
    <property type="project" value="UniProtKB-KW"/>
</dbReference>
<dbReference type="GO" id="GO:0009252">
    <property type="term" value="P:peptidoglycan biosynthetic process"/>
    <property type="evidence" value="ECO:0007669"/>
    <property type="project" value="UniProtKB-UniRule"/>
</dbReference>
<dbReference type="GO" id="GO:0008360">
    <property type="term" value="P:regulation of cell shape"/>
    <property type="evidence" value="ECO:0007669"/>
    <property type="project" value="UniProtKB-KW"/>
</dbReference>
<dbReference type="Gene3D" id="3.90.190.20">
    <property type="entry name" value="Mur ligase, C-terminal domain"/>
    <property type="match status" value="1"/>
</dbReference>
<dbReference type="Gene3D" id="3.40.1190.10">
    <property type="entry name" value="Mur-like, catalytic domain"/>
    <property type="match status" value="1"/>
</dbReference>
<dbReference type="Gene3D" id="3.40.50.720">
    <property type="entry name" value="NAD(P)-binding Rossmann-like Domain"/>
    <property type="match status" value="1"/>
</dbReference>
<dbReference type="HAMAP" id="MF_00639">
    <property type="entry name" value="MurD"/>
    <property type="match status" value="1"/>
</dbReference>
<dbReference type="InterPro" id="IPR036565">
    <property type="entry name" value="Mur-like_cat_sf"/>
</dbReference>
<dbReference type="InterPro" id="IPR004101">
    <property type="entry name" value="Mur_ligase_C"/>
</dbReference>
<dbReference type="InterPro" id="IPR036615">
    <property type="entry name" value="Mur_ligase_C_dom_sf"/>
</dbReference>
<dbReference type="InterPro" id="IPR013221">
    <property type="entry name" value="Mur_ligase_cen"/>
</dbReference>
<dbReference type="InterPro" id="IPR005762">
    <property type="entry name" value="MurD"/>
</dbReference>
<dbReference type="NCBIfam" id="TIGR01087">
    <property type="entry name" value="murD"/>
    <property type="match status" value="1"/>
</dbReference>
<dbReference type="PANTHER" id="PTHR43692">
    <property type="entry name" value="UDP-N-ACETYLMURAMOYLALANINE--D-GLUTAMATE LIGASE"/>
    <property type="match status" value="1"/>
</dbReference>
<dbReference type="PANTHER" id="PTHR43692:SF1">
    <property type="entry name" value="UDP-N-ACETYLMURAMOYLALANINE--D-GLUTAMATE LIGASE"/>
    <property type="match status" value="1"/>
</dbReference>
<dbReference type="Pfam" id="PF02875">
    <property type="entry name" value="Mur_ligase_C"/>
    <property type="match status" value="1"/>
</dbReference>
<dbReference type="Pfam" id="PF08245">
    <property type="entry name" value="Mur_ligase_M"/>
    <property type="match status" value="1"/>
</dbReference>
<dbReference type="SUPFAM" id="SSF51984">
    <property type="entry name" value="MurCD N-terminal domain"/>
    <property type="match status" value="1"/>
</dbReference>
<dbReference type="SUPFAM" id="SSF53623">
    <property type="entry name" value="MurD-like peptide ligases, catalytic domain"/>
    <property type="match status" value="1"/>
</dbReference>
<dbReference type="SUPFAM" id="SSF53244">
    <property type="entry name" value="MurD-like peptide ligases, peptide-binding domain"/>
    <property type="match status" value="1"/>
</dbReference>
<name>MURD_MYCPA</name>
<organism>
    <name type="scientific">Mycolicibacterium paratuberculosis (strain ATCC BAA-968 / K-10)</name>
    <name type="common">Mycobacterium paratuberculosis</name>
    <dbReference type="NCBI Taxonomy" id="262316"/>
    <lineage>
        <taxon>Bacteria</taxon>
        <taxon>Bacillati</taxon>
        <taxon>Actinomycetota</taxon>
        <taxon>Actinomycetes</taxon>
        <taxon>Mycobacteriales</taxon>
        <taxon>Mycobacteriaceae</taxon>
        <taxon>Mycobacterium</taxon>
        <taxon>Mycobacterium avium complex (MAC)</taxon>
    </lineage>
</organism>
<gene>
    <name evidence="1" type="primary">murD</name>
    <name type="ordered locus">MAP_1899c</name>
</gene>
<reference key="1">
    <citation type="journal article" date="2005" name="Proc. Natl. Acad. Sci. U.S.A.">
        <title>The complete genome sequence of Mycobacterium avium subspecies paratuberculosis.</title>
        <authorList>
            <person name="Li L."/>
            <person name="Bannantine J.P."/>
            <person name="Zhang Q."/>
            <person name="Amonsin A."/>
            <person name="May B.J."/>
            <person name="Alt D."/>
            <person name="Banerji N."/>
            <person name="Kanjilal S."/>
            <person name="Kapur V."/>
        </authorList>
    </citation>
    <scope>NUCLEOTIDE SEQUENCE [LARGE SCALE GENOMIC DNA]</scope>
    <source>
        <strain>ATCC BAA-968 / K-10</strain>
    </source>
</reference>
<keyword id="KW-0067">ATP-binding</keyword>
<keyword id="KW-0131">Cell cycle</keyword>
<keyword id="KW-0132">Cell division</keyword>
<keyword id="KW-0133">Cell shape</keyword>
<keyword id="KW-0961">Cell wall biogenesis/degradation</keyword>
<keyword id="KW-0963">Cytoplasm</keyword>
<keyword id="KW-0436">Ligase</keyword>
<keyword id="KW-0547">Nucleotide-binding</keyword>
<keyword id="KW-0573">Peptidoglycan synthesis</keyword>
<keyword id="KW-1185">Reference proteome</keyword>
<accession>Q73YQ6</accession>
<evidence type="ECO:0000255" key="1">
    <source>
        <dbReference type="HAMAP-Rule" id="MF_00639"/>
    </source>
</evidence>